<evidence type="ECO:0000255" key="1"/>
<evidence type="ECO:0000255" key="2">
    <source>
        <dbReference type="PROSITE-ProRule" id="PRU00159"/>
    </source>
</evidence>
<evidence type="ECO:0000256" key="3">
    <source>
        <dbReference type="SAM" id="MobiDB-lite"/>
    </source>
</evidence>
<evidence type="ECO:0000269" key="4">
    <source>
    </source>
</evidence>
<evidence type="ECO:0000305" key="5"/>
<evidence type="ECO:0000305" key="6">
    <source>
    </source>
</evidence>
<evidence type="ECO:0000312" key="7">
    <source>
        <dbReference type="Proteomes" id="UP000001940"/>
    </source>
</evidence>
<evidence type="ECO:0000312" key="8">
    <source>
        <dbReference type="WormBase" id="F18F11.5"/>
    </source>
</evidence>
<reference evidence="7" key="1">
    <citation type="journal article" date="1998" name="Science">
        <title>Genome sequence of the nematode C. elegans: a platform for investigating biology.</title>
        <authorList>
            <consortium name="The C. elegans sequencing consortium"/>
        </authorList>
    </citation>
    <scope>NUCLEOTIDE SEQUENCE [LARGE SCALE GENOMIC DNA]</scope>
    <source>
        <strain evidence="7">Bristol N2</strain>
    </source>
</reference>
<reference evidence="5" key="2">
    <citation type="journal article" date="2014" name="Aging Cell">
        <title>A novel kinase regulates dietary restriction-mediated longevity in Caenorhabditis elegans.</title>
        <authorList>
            <person name="Chamoli M."/>
            <person name="Singh A."/>
            <person name="Malik Y."/>
            <person name="Mukhopadhyay A."/>
        </authorList>
    </citation>
    <scope>FUNCTION</scope>
    <scope>TISSUE SPECIFICITY</scope>
    <scope>DISRUPTION PHENOTYPE</scope>
</reference>
<sequence>MHSEEKYLHIPNNTKYPEIIVEEEEEDPSEEERSELSETDDVATPLRPSDTFPFKRRNSPCSIKMSEEHLKRLREIACPSPTPTQCSTVSKHEFQNWRINEDVMKDMMHIGTICERENVCKTSKYVYTATMASYTVTEWKLKEGNTPDEIEKISRTIEDLCQLRHKRLAPMYGYHWRLETELMVFRAHVPSGTVADLVKVSAIPQETAVRYIVHVIDALAYLHERKHVHGKLNASNLLLTISNDILLADPFIEGLPSAQKRRALLASPPEAFRSLESYPCLTPSSDIWSVGCVLVTMLTRYPPFLEHYMHFHGESLHRELVSEWCTRRQLIYSSQTLIPSASKEICELIDQIFNVDPENRPSAQNLLESHGSKSRKASLRNSLASLTTAKEPDPPKPIDDFYVEREDDEEHRKIEELRELAERGNNEGGFIPFIRWYMSRILIFSVLLVKWIGMVLCAALSLAAVAGGVFFAIFLIYNGIQIACQCSLNEGFVVLIALILLPIIILLTTLCCNNSLDRYHADVESGKVEKSRFVMKTPEKDVIVGGYILVEGSPDHDKPAEVPRKLGISEGLQSTMGNTFLGYGVDKIA</sequence>
<proteinExistence type="evidence at transcript level"/>
<accession>Q86ME2</accession>
<feature type="chain" id="PRO_0000435334" description="Protein drl-1" evidence="5">
    <location>
        <begin position="1"/>
        <end position="589"/>
    </location>
</feature>
<feature type="transmembrane region" description="Helical" evidence="1">
    <location>
        <begin position="429"/>
        <end position="449"/>
    </location>
</feature>
<feature type="transmembrane region" description="Helical" evidence="1">
    <location>
        <begin position="456"/>
        <end position="476"/>
    </location>
</feature>
<feature type="transmembrane region" description="Helical" evidence="1">
    <location>
        <begin position="491"/>
        <end position="511"/>
    </location>
</feature>
<feature type="domain" description="Protein kinase" evidence="2">
    <location>
        <begin position="97"/>
        <end position="373"/>
    </location>
</feature>
<feature type="region of interest" description="Disordered" evidence="3">
    <location>
        <begin position="1"/>
        <end position="51"/>
    </location>
</feature>
<feature type="compositionally biased region" description="Acidic residues" evidence="3">
    <location>
        <begin position="20"/>
        <end position="41"/>
    </location>
</feature>
<name>DRL1_CAEEL</name>
<dbReference type="EMBL" id="BX284604">
    <property type="protein sequence ID" value="CCD69674.2"/>
    <property type="molecule type" value="Genomic_DNA"/>
</dbReference>
<dbReference type="RefSeq" id="NP_001023134.2">
    <property type="nucleotide sequence ID" value="NM_001027963.5"/>
</dbReference>
<dbReference type="SMR" id="Q86ME2"/>
<dbReference type="FunCoup" id="Q86ME2">
    <property type="interactions" value="48"/>
</dbReference>
<dbReference type="STRING" id="6239.F18F11.5.1"/>
<dbReference type="PaxDb" id="6239-F18F11.5"/>
<dbReference type="EnsemblMetazoa" id="F18F11.5.1">
    <property type="protein sequence ID" value="F18F11.5.1"/>
    <property type="gene ID" value="WBGene00017578"/>
</dbReference>
<dbReference type="GeneID" id="3565236"/>
<dbReference type="KEGG" id="cel:CELE_F18F11.5"/>
<dbReference type="UCSC" id="F18F11.5">
    <property type="organism name" value="c. elegans"/>
</dbReference>
<dbReference type="AGR" id="WB:WBGene00017578"/>
<dbReference type="CTD" id="3565236"/>
<dbReference type="WormBase" id="F18F11.5">
    <property type="protein sequence ID" value="CE48587"/>
    <property type="gene ID" value="WBGene00017578"/>
    <property type="gene designation" value="drl-1"/>
</dbReference>
<dbReference type="eggNOG" id="KOG0198">
    <property type="taxonomic scope" value="Eukaryota"/>
</dbReference>
<dbReference type="GeneTree" id="ENSGT00940000160383"/>
<dbReference type="HOGENOM" id="CLU_032945_0_0_1"/>
<dbReference type="InParanoid" id="Q86ME2"/>
<dbReference type="OMA" id="NGIQIAC"/>
<dbReference type="OrthoDB" id="5816437at2759"/>
<dbReference type="PRO" id="PR:Q86ME2"/>
<dbReference type="Proteomes" id="UP000001940">
    <property type="component" value="Chromosome IV"/>
</dbReference>
<dbReference type="Bgee" id="WBGene00017578">
    <property type="expression patterns" value="Expressed in adult organism and 2 other cell types or tissues"/>
</dbReference>
<dbReference type="GO" id="GO:0005737">
    <property type="term" value="C:cytoplasm"/>
    <property type="evidence" value="ECO:0000318"/>
    <property type="project" value="GO_Central"/>
</dbReference>
<dbReference type="GO" id="GO:0016020">
    <property type="term" value="C:membrane"/>
    <property type="evidence" value="ECO:0007669"/>
    <property type="project" value="UniProtKB-SubCell"/>
</dbReference>
<dbReference type="GO" id="GO:0005524">
    <property type="term" value="F:ATP binding"/>
    <property type="evidence" value="ECO:0007669"/>
    <property type="project" value="InterPro"/>
</dbReference>
<dbReference type="GO" id="GO:0004672">
    <property type="term" value="F:protein kinase activity"/>
    <property type="evidence" value="ECO:0007669"/>
    <property type="project" value="InterPro"/>
</dbReference>
<dbReference type="Gene3D" id="1.10.510.10">
    <property type="entry name" value="Transferase(Phosphotransferase) domain 1"/>
    <property type="match status" value="1"/>
</dbReference>
<dbReference type="InterPro" id="IPR011009">
    <property type="entry name" value="Kinase-like_dom_sf"/>
</dbReference>
<dbReference type="InterPro" id="IPR000719">
    <property type="entry name" value="Prot_kinase_dom"/>
</dbReference>
<dbReference type="InterPro" id="IPR053235">
    <property type="entry name" value="Ser_Thr_kinase"/>
</dbReference>
<dbReference type="PANTHER" id="PTHR24361">
    <property type="entry name" value="MITOGEN-ACTIVATED KINASE KINASE KINASE"/>
    <property type="match status" value="1"/>
</dbReference>
<dbReference type="PANTHER" id="PTHR24361:SF824">
    <property type="entry name" value="SERINE_THREONINE-PROTEIN KINASE NEK6"/>
    <property type="match status" value="1"/>
</dbReference>
<dbReference type="Pfam" id="PF00069">
    <property type="entry name" value="Pkinase"/>
    <property type="match status" value="1"/>
</dbReference>
<dbReference type="SUPFAM" id="SSF56112">
    <property type="entry name" value="Protein kinase-like (PK-like)"/>
    <property type="match status" value="1"/>
</dbReference>
<dbReference type="PROSITE" id="PS50011">
    <property type="entry name" value="PROTEIN_KINASE_DOM"/>
    <property type="match status" value="1"/>
</dbReference>
<organism evidence="7">
    <name type="scientific">Caenorhabditis elegans</name>
    <dbReference type="NCBI Taxonomy" id="6239"/>
    <lineage>
        <taxon>Eukaryota</taxon>
        <taxon>Metazoa</taxon>
        <taxon>Ecdysozoa</taxon>
        <taxon>Nematoda</taxon>
        <taxon>Chromadorea</taxon>
        <taxon>Rhabditida</taxon>
        <taxon>Rhabditina</taxon>
        <taxon>Rhabditomorpha</taxon>
        <taxon>Rhabditoidea</taxon>
        <taxon>Rhabditidae</taxon>
        <taxon>Peloderinae</taxon>
        <taxon>Caenorhabditis</taxon>
    </lineage>
</organism>
<gene>
    <name evidence="8" type="primary">drl-1</name>
    <name evidence="8" type="synonym">mekk-3</name>
    <name evidence="8" type="ORF">F18F11.5</name>
</gene>
<protein>
    <recommendedName>
        <fullName evidence="5">Protein drl-1</fullName>
    </recommendedName>
    <alternativeName>
        <fullName evidence="8">Dietary restriction-like protein 1</fullName>
    </alternativeName>
</protein>
<keyword id="KW-0472">Membrane</keyword>
<keyword id="KW-1185">Reference proteome</keyword>
<keyword id="KW-0812">Transmembrane</keyword>
<keyword id="KW-1133">Transmembrane helix</keyword>
<comment type="function">
    <text evidence="4">Negatively regulates lifespan and health span probably by participating in nutrient sensing.</text>
</comment>
<comment type="subcellular location">
    <subcellularLocation>
        <location evidence="1">Membrane</location>
        <topology evidence="1">Multi-pass membrane protein</topology>
    </subcellularLocation>
</comment>
<comment type="tissue specificity">
    <text evidence="4">Expressed in vulval and body wall muscles, hypodermis, seam cells and tissues next to pharynx and anus.</text>
</comment>
<comment type="domain">
    <text evidence="2">The protein kinase domain is predicted to be catalytically inactive.</text>
</comment>
<comment type="disruption phenotype">
    <text evidence="4">RNAi-mediated knockdown causes an increase in lifespan of about 60 percent compared to wild type but only when done at an early larval stage. Lifespan increase is associated with a decrease in the accumulation of the age pigment lipofuscin, a delayed age-onset nuclear membrane disintegration in muscles and loss of mobility. In addition, causes an increase in lipid catabolism resulting in fewer fat droplets in intestinal cells and hypodermis and lower triglycerides levels. Transcriptional up-regulation of genes involved in fatty acid degradation and in xenobiotic detoxification and decrease in cellular oxygen reactive species (ROS) production. Low brood size, longer reproductive span, increased autophagosome formation in seam cells and smaller body size. Normal pharyngeal pumping and feeding rate. RNAi-mediated knockdown in muscles or hypodermis causes a moderate increase in lifespan.</text>
</comment>
<comment type="similarity">
    <text evidence="5">Belongs to the protein kinase superfamily. STE Ser/Thr protein kinase family.</text>
</comment>
<comment type="caution">
    <text evidence="6">Although the residues involved in the catalytic activity are absent, suggesting that the kinase is inactive, some kinase activity has been detected.</text>
</comment>